<proteinExistence type="inferred from homology"/>
<gene>
    <name evidence="1" type="primary">rpsG</name>
    <name type="ordered locus">LSL_0201</name>
</gene>
<organism>
    <name type="scientific">Ligilactobacillus salivarius (strain UCC118)</name>
    <name type="common">Lactobacillus salivarius</name>
    <dbReference type="NCBI Taxonomy" id="362948"/>
    <lineage>
        <taxon>Bacteria</taxon>
        <taxon>Bacillati</taxon>
        <taxon>Bacillota</taxon>
        <taxon>Bacilli</taxon>
        <taxon>Lactobacillales</taxon>
        <taxon>Lactobacillaceae</taxon>
        <taxon>Ligilactobacillus</taxon>
    </lineage>
</organism>
<comment type="function">
    <text evidence="1">One of the primary rRNA binding proteins, it binds directly to 16S rRNA where it nucleates assembly of the head domain of the 30S subunit. Is located at the subunit interface close to the decoding center, probably blocks exit of the E-site tRNA.</text>
</comment>
<comment type="subunit">
    <text evidence="1">Part of the 30S ribosomal subunit. Contacts proteins S9 and S11.</text>
</comment>
<comment type="similarity">
    <text evidence="1">Belongs to the universal ribosomal protein uS7 family.</text>
</comment>
<dbReference type="EMBL" id="CP000233">
    <property type="protein sequence ID" value="ABD99016.1"/>
    <property type="molecule type" value="Genomic_DNA"/>
</dbReference>
<dbReference type="RefSeq" id="WP_003699701.1">
    <property type="nucleotide sequence ID" value="NC_007929.1"/>
</dbReference>
<dbReference type="RefSeq" id="YP_535099.1">
    <property type="nucleotide sequence ID" value="NC_007929.1"/>
</dbReference>
<dbReference type="SMR" id="Q1WVA1"/>
<dbReference type="STRING" id="362948.LSL_0201"/>
<dbReference type="GeneID" id="89464946"/>
<dbReference type="KEGG" id="lsl:LSL_0201"/>
<dbReference type="PATRIC" id="fig|362948.14.peg.278"/>
<dbReference type="HOGENOM" id="CLU_072226_1_1_9"/>
<dbReference type="OrthoDB" id="9807653at2"/>
<dbReference type="Proteomes" id="UP000006559">
    <property type="component" value="Chromosome"/>
</dbReference>
<dbReference type="GO" id="GO:0015935">
    <property type="term" value="C:small ribosomal subunit"/>
    <property type="evidence" value="ECO:0007669"/>
    <property type="project" value="InterPro"/>
</dbReference>
<dbReference type="GO" id="GO:0019843">
    <property type="term" value="F:rRNA binding"/>
    <property type="evidence" value="ECO:0007669"/>
    <property type="project" value="UniProtKB-UniRule"/>
</dbReference>
<dbReference type="GO" id="GO:0003735">
    <property type="term" value="F:structural constituent of ribosome"/>
    <property type="evidence" value="ECO:0007669"/>
    <property type="project" value="InterPro"/>
</dbReference>
<dbReference type="GO" id="GO:0000049">
    <property type="term" value="F:tRNA binding"/>
    <property type="evidence" value="ECO:0007669"/>
    <property type="project" value="UniProtKB-UniRule"/>
</dbReference>
<dbReference type="GO" id="GO:0006412">
    <property type="term" value="P:translation"/>
    <property type="evidence" value="ECO:0007669"/>
    <property type="project" value="UniProtKB-UniRule"/>
</dbReference>
<dbReference type="CDD" id="cd14869">
    <property type="entry name" value="uS7_Bacteria"/>
    <property type="match status" value="1"/>
</dbReference>
<dbReference type="FunFam" id="1.10.455.10:FF:000001">
    <property type="entry name" value="30S ribosomal protein S7"/>
    <property type="match status" value="1"/>
</dbReference>
<dbReference type="Gene3D" id="1.10.455.10">
    <property type="entry name" value="Ribosomal protein S7 domain"/>
    <property type="match status" value="1"/>
</dbReference>
<dbReference type="HAMAP" id="MF_00480_B">
    <property type="entry name" value="Ribosomal_uS7_B"/>
    <property type="match status" value="1"/>
</dbReference>
<dbReference type="InterPro" id="IPR000235">
    <property type="entry name" value="Ribosomal_uS7"/>
</dbReference>
<dbReference type="InterPro" id="IPR005717">
    <property type="entry name" value="Ribosomal_uS7_bac/org-type"/>
</dbReference>
<dbReference type="InterPro" id="IPR020606">
    <property type="entry name" value="Ribosomal_uS7_CS"/>
</dbReference>
<dbReference type="InterPro" id="IPR023798">
    <property type="entry name" value="Ribosomal_uS7_dom"/>
</dbReference>
<dbReference type="InterPro" id="IPR036823">
    <property type="entry name" value="Ribosomal_uS7_dom_sf"/>
</dbReference>
<dbReference type="NCBIfam" id="TIGR01029">
    <property type="entry name" value="rpsG_bact"/>
    <property type="match status" value="1"/>
</dbReference>
<dbReference type="PANTHER" id="PTHR11205">
    <property type="entry name" value="RIBOSOMAL PROTEIN S7"/>
    <property type="match status" value="1"/>
</dbReference>
<dbReference type="Pfam" id="PF00177">
    <property type="entry name" value="Ribosomal_S7"/>
    <property type="match status" value="1"/>
</dbReference>
<dbReference type="PIRSF" id="PIRSF002122">
    <property type="entry name" value="RPS7p_RPS7a_RPS5e_RPS7o"/>
    <property type="match status" value="1"/>
</dbReference>
<dbReference type="SUPFAM" id="SSF47973">
    <property type="entry name" value="Ribosomal protein S7"/>
    <property type="match status" value="1"/>
</dbReference>
<dbReference type="PROSITE" id="PS00052">
    <property type="entry name" value="RIBOSOMAL_S7"/>
    <property type="match status" value="1"/>
</dbReference>
<accession>Q1WVA1</accession>
<name>RS7_LIGS1</name>
<sequence length="156" mass="17908">MPRKGAVAKREVLPDPIYNSKLVTRLINRLMLDGKRGTASKILYQAFDIIKEQTGNEPLDVFEEAMKNIMPVLEVKARRVGGSNYQVPIEVRPDRRTTLGLRWLVQYSRLRGEHTMSERLAKEIMDAANNTGAAVKKREDTHKMADANRAFAHYRW</sequence>
<reference key="1">
    <citation type="journal article" date="2006" name="Proc. Natl. Acad. Sci. U.S.A.">
        <title>Multireplicon genome architecture of Lactobacillus salivarius.</title>
        <authorList>
            <person name="Claesson M.J."/>
            <person name="Li Y."/>
            <person name="Leahy S."/>
            <person name="Canchaya C."/>
            <person name="van Pijkeren J.P."/>
            <person name="Cerdeno-Tarraga A.M."/>
            <person name="Parkhill J."/>
            <person name="Flynn S."/>
            <person name="O'Sullivan G.C."/>
            <person name="Collins J.K."/>
            <person name="Higgins D."/>
            <person name="Shanahan F."/>
            <person name="Fitzgerald G.F."/>
            <person name="van Sinderen D."/>
            <person name="O'Toole P.W."/>
        </authorList>
    </citation>
    <scope>NUCLEOTIDE SEQUENCE [LARGE SCALE GENOMIC DNA]</scope>
    <source>
        <strain>UCC118</strain>
    </source>
</reference>
<evidence type="ECO:0000255" key="1">
    <source>
        <dbReference type="HAMAP-Rule" id="MF_00480"/>
    </source>
</evidence>
<evidence type="ECO:0000305" key="2"/>
<keyword id="KW-1185">Reference proteome</keyword>
<keyword id="KW-0687">Ribonucleoprotein</keyword>
<keyword id="KW-0689">Ribosomal protein</keyword>
<keyword id="KW-0694">RNA-binding</keyword>
<keyword id="KW-0699">rRNA-binding</keyword>
<keyword id="KW-0820">tRNA-binding</keyword>
<feature type="chain" id="PRO_1000014215" description="Small ribosomal subunit protein uS7">
    <location>
        <begin position="1"/>
        <end position="156"/>
    </location>
</feature>
<protein>
    <recommendedName>
        <fullName evidence="1">Small ribosomal subunit protein uS7</fullName>
    </recommendedName>
    <alternativeName>
        <fullName evidence="2">30S ribosomal protein S7</fullName>
    </alternativeName>
</protein>